<evidence type="ECO:0000255" key="1">
    <source>
        <dbReference type="HAMAP-Rule" id="MF_00235"/>
    </source>
</evidence>
<dbReference type="EC" id="2.7.4.3" evidence="1"/>
<dbReference type="EMBL" id="CP000356">
    <property type="protein sequence ID" value="ABF54502.1"/>
    <property type="molecule type" value="Genomic_DNA"/>
</dbReference>
<dbReference type="RefSeq" id="WP_011543067.1">
    <property type="nucleotide sequence ID" value="NC_008048.1"/>
</dbReference>
<dbReference type="SMR" id="Q1GPC0"/>
<dbReference type="STRING" id="317655.Sala_2797"/>
<dbReference type="KEGG" id="sal:Sala_2797"/>
<dbReference type="eggNOG" id="COG0563">
    <property type="taxonomic scope" value="Bacteria"/>
</dbReference>
<dbReference type="HOGENOM" id="CLU_032354_1_2_5"/>
<dbReference type="OrthoDB" id="9805030at2"/>
<dbReference type="UniPathway" id="UPA00588">
    <property type="reaction ID" value="UER00649"/>
</dbReference>
<dbReference type="Proteomes" id="UP000006578">
    <property type="component" value="Chromosome"/>
</dbReference>
<dbReference type="GO" id="GO:0005737">
    <property type="term" value="C:cytoplasm"/>
    <property type="evidence" value="ECO:0007669"/>
    <property type="project" value="UniProtKB-SubCell"/>
</dbReference>
<dbReference type="GO" id="GO:0004017">
    <property type="term" value="F:adenylate kinase activity"/>
    <property type="evidence" value="ECO:0007669"/>
    <property type="project" value="UniProtKB-UniRule"/>
</dbReference>
<dbReference type="GO" id="GO:0005524">
    <property type="term" value="F:ATP binding"/>
    <property type="evidence" value="ECO:0007669"/>
    <property type="project" value="UniProtKB-UniRule"/>
</dbReference>
<dbReference type="GO" id="GO:0008270">
    <property type="term" value="F:zinc ion binding"/>
    <property type="evidence" value="ECO:0007669"/>
    <property type="project" value="UniProtKB-UniRule"/>
</dbReference>
<dbReference type="GO" id="GO:0044209">
    <property type="term" value="P:AMP salvage"/>
    <property type="evidence" value="ECO:0007669"/>
    <property type="project" value="UniProtKB-UniRule"/>
</dbReference>
<dbReference type="CDD" id="cd01428">
    <property type="entry name" value="ADK"/>
    <property type="match status" value="1"/>
</dbReference>
<dbReference type="FunFam" id="3.40.50.300:FF:000106">
    <property type="entry name" value="Adenylate kinase mitochondrial"/>
    <property type="match status" value="1"/>
</dbReference>
<dbReference type="Gene3D" id="3.40.50.300">
    <property type="entry name" value="P-loop containing nucleotide triphosphate hydrolases"/>
    <property type="match status" value="1"/>
</dbReference>
<dbReference type="HAMAP" id="MF_00235">
    <property type="entry name" value="Adenylate_kinase_Adk"/>
    <property type="match status" value="1"/>
</dbReference>
<dbReference type="InterPro" id="IPR006259">
    <property type="entry name" value="Adenyl_kin_sub"/>
</dbReference>
<dbReference type="InterPro" id="IPR000850">
    <property type="entry name" value="Adenylat/UMP-CMP_kin"/>
</dbReference>
<dbReference type="InterPro" id="IPR033690">
    <property type="entry name" value="Adenylat_kinase_CS"/>
</dbReference>
<dbReference type="InterPro" id="IPR007862">
    <property type="entry name" value="Adenylate_kinase_lid-dom"/>
</dbReference>
<dbReference type="InterPro" id="IPR027417">
    <property type="entry name" value="P-loop_NTPase"/>
</dbReference>
<dbReference type="NCBIfam" id="TIGR01351">
    <property type="entry name" value="adk"/>
    <property type="match status" value="1"/>
</dbReference>
<dbReference type="NCBIfam" id="NF001381">
    <property type="entry name" value="PRK00279.1-3"/>
    <property type="match status" value="1"/>
</dbReference>
<dbReference type="NCBIfam" id="NF011100">
    <property type="entry name" value="PRK14527.1"/>
    <property type="match status" value="1"/>
</dbReference>
<dbReference type="NCBIfam" id="NF011105">
    <property type="entry name" value="PRK14532.1"/>
    <property type="match status" value="1"/>
</dbReference>
<dbReference type="PANTHER" id="PTHR23359">
    <property type="entry name" value="NUCLEOTIDE KINASE"/>
    <property type="match status" value="1"/>
</dbReference>
<dbReference type="Pfam" id="PF00406">
    <property type="entry name" value="ADK"/>
    <property type="match status" value="1"/>
</dbReference>
<dbReference type="Pfam" id="PF05191">
    <property type="entry name" value="ADK_lid"/>
    <property type="match status" value="1"/>
</dbReference>
<dbReference type="PRINTS" id="PR00094">
    <property type="entry name" value="ADENYLTKNASE"/>
</dbReference>
<dbReference type="SUPFAM" id="SSF52540">
    <property type="entry name" value="P-loop containing nucleoside triphosphate hydrolases"/>
    <property type="match status" value="1"/>
</dbReference>
<dbReference type="PROSITE" id="PS00113">
    <property type="entry name" value="ADENYLATE_KINASE"/>
    <property type="match status" value="1"/>
</dbReference>
<reference key="1">
    <citation type="journal article" date="2009" name="Proc. Natl. Acad. Sci. U.S.A.">
        <title>The genomic basis of trophic strategy in marine bacteria.</title>
        <authorList>
            <person name="Lauro F.M."/>
            <person name="McDougald D."/>
            <person name="Thomas T."/>
            <person name="Williams T.J."/>
            <person name="Egan S."/>
            <person name="Rice S."/>
            <person name="DeMaere M.Z."/>
            <person name="Ting L."/>
            <person name="Ertan H."/>
            <person name="Johnson J."/>
            <person name="Ferriera S."/>
            <person name="Lapidus A."/>
            <person name="Anderson I."/>
            <person name="Kyrpides N."/>
            <person name="Munk A.C."/>
            <person name="Detter C."/>
            <person name="Han C.S."/>
            <person name="Brown M.V."/>
            <person name="Robb F.T."/>
            <person name="Kjelleberg S."/>
            <person name="Cavicchioli R."/>
        </authorList>
    </citation>
    <scope>NUCLEOTIDE SEQUENCE [LARGE SCALE GENOMIC DNA]</scope>
    <source>
        <strain>DSM 13593 / LMG 18877 / RB2256</strain>
    </source>
</reference>
<gene>
    <name evidence="1" type="primary">adk</name>
    <name type="ordered locus">Sala_2797</name>
</gene>
<feature type="chain" id="PRO_1000021769" description="Adenylate kinase">
    <location>
        <begin position="1"/>
        <end position="219"/>
    </location>
</feature>
<feature type="region of interest" description="NMP" evidence="1">
    <location>
        <begin position="32"/>
        <end position="61"/>
    </location>
</feature>
<feature type="region of interest" description="LID" evidence="1">
    <location>
        <begin position="128"/>
        <end position="165"/>
    </location>
</feature>
<feature type="binding site" evidence="1">
    <location>
        <begin position="12"/>
        <end position="17"/>
    </location>
    <ligand>
        <name>ATP</name>
        <dbReference type="ChEBI" id="CHEBI:30616"/>
    </ligand>
</feature>
<feature type="binding site" evidence="1">
    <location>
        <position position="33"/>
    </location>
    <ligand>
        <name>AMP</name>
        <dbReference type="ChEBI" id="CHEBI:456215"/>
    </ligand>
</feature>
<feature type="binding site" evidence="1">
    <location>
        <position position="38"/>
    </location>
    <ligand>
        <name>AMP</name>
        <dbReference type="ChEBI" id="CHEBI:456215"/>
    </ligand>
</feature>
<feature type="binding site" evidence="1">
    <location>
        <begin position="59"/>
        <end position="61"/>
    </location>
    <ligand>
        <name>AMP</name>
        <dbReference type="ChEBI" id="CHEBI:456215"/>
    </ligand>
</feature>
<feature type="binding site" evidence="1">
    <location>
        <begin position="87"/>
        <end position="90"/>
    </location>
    <ligand>
        <name>AMP</name>
        <dbReference type="ChEBI" id="CHEBI:456215"/>
    </ligand>
</feature>
<feature type="binding site" evidence="1">
    <location>
        <position position="94"/>
    </location>
    <ligand>
        <name>AMP</name>
        <dbReference type="ChEBI" id="CHEBI:456215"/>
    </ligand>
</feature>
<feature type="binding site" evidence="1">
    <location>
        <position position="129"/>
    </location>
    <ligand>
        <name>ATP</name>
        <dbReference type="ChEBI" id="CHEBI:30616"/>
    </ligand>
</feature>
<feature type="binding site" evidence="1">
    <location>
        <position position="132"/>
    </location>
    <ligand>
        <name>Zn(2+)</name>
        <dbReference type="ChEBI" id="CHEBI:29105"/>
        <note>structural</note>
    </ligand>
</feature>
<feature type="binding site" evidence="1">
    <location>
        <position position="135"/>
    </location>
    <ligand>
        <name>Zn(2+)</name>
        <dbReference type="ChEBI" id="CHEBI:29105"/>
        <note>structural</note>
    </ligand>
</feature>
<feature type="binding site" evidence="1">
    <location>
        <position position="152"/>
    </location>
    <ligand>
        <name>Zn(2+)</name>
        <dbReference type="ChEBI" id="CHEBI:29105"/>
        <note>structural</note>
    </ligand>
</feature>
<feature type="binding site" evidence="1">
    <location>
        <position position="155"/>
    </location>
    <ligand>
        <name>Zn(2+)</name>
        <dbReference type="ChEBI" id="CHEBI:29105"/>
        <note>structural</note>
    </ligand>
</feature>
<feature type="binding site" evidence="1">
    <location>
        <position position="162"/>
    </location>
    <ligand>
        <name>AMP</name>
        <dbReference type="ChEBI" id="CHEBI:456215"/>
    </ligand>
</feature>
<feature type="binding site" evidence="1">
    <location>
        <position position="174"/>
    </location>
    <ligand>
        <name>AMP</name>
        <dbReference type="ChEBI" id="CHEBI:456215"/>
    </ligand>
</feature>
<feature type="binding site" evidence="1">
    <location>
        <position position="202"/>
    </location>
    <ligand>
        <name>ATP</name>
        <dbReference type="ChEBI" id="CHEBI:30616"/>
    </ligand>
</feature>
<protein>
    <recommendedName>
        <fullName evidence="1">Adenylate kinase</fullName>
        <shortName evidence="1">AK</shortName>
        <ecNumber evidence="1">2.7.4.3</ecNumber>
    </recommendedName>
    <alternativeName>
        <fullName evidence="1">ATP-AMP transphosphorylase</fullName>
    </alternativeName>
    <alternativeName>
        <fullName evidence="1">ATP:AMP phosphotransferase</fullName>
    </alternativeName>
    <alternativeName>
        <fullName evidence="1">Adenylate monophosphate kinase</fullName>
    </alternativeName>
</protein>
<sequence length="219" mass="23463">MTLNIILLGPPGAGKGTQASRLEDEHGMVQLSTGDMLRAAVKAGTPIGLQAKAVMDAGELVSDAIVSGLIGERLDELGPDVSVIFDGYPRTAAQADALDGILSARGRTLDHVIELVVDEDALVDRITGRFSCARCGEGYHDRYKLPKVADICDVCGSKEFKRRPDDNEDTVRTRMVEYRAKTAPILPIYEARGIVTRVDGMAPIDRVNDAIETILGTAG</sequence>
<name>KAD_SPHAL</name>
<proteinExistence type="inferred from homology"/>
<comment type="function">
    <text evidence="1">Catalyzes the reversible transfer of the terminal phosphate group between ATP and AMP. Plays an important role in cellular energy homeostasis and in adenine nucleotide metabolism.</text>
</comment>
<comment type="catalytic activity">
    <reaction evidence="1">
        <text>AMP + ATP = 2 ADP</text>
        <dbReference type="Rhea" id="RHEA:12973"/>
        <dbReference type="ChEBI" id="CHEBI:30616"/>
        <dbReference type="ChEBI" id="CHEBI:456215"/>
        <dbReference type="ChEBI" id="CHEBI:456216"/>
        <dbReference type="EC" id="2.7.4.3"/>
    </reaction>
</comment>
<comment type="pathway">
    <text evidence="1">Purine metabolism; AMP biosynthesis via salvage pathway; AMP from ADP: step 1/1.</text>
</comment>
<comment type="subunit">
    <text evidence="1">Monomer.</text>
</comment>
<comment type="subcellular location">
    <subcellularLocation>
        <location evidence="1">Cytoplasm</location>
    </subcellularLocation>
</comment>
<comment type="domain">
    <text evidence="1">Consists of three domains, a large central CORE domain and two small peripheral domains, NMPbind and LID, which undergo movements during catalysis. The LID domain closes over the site of phosphoryl transfer upon ATP binding. Assembling and dissambling the active center during each catalytic cycle provides an effective means to prevent ATP hydrolysis. Some bacteria have evolved a zinc-coordinating structure that stabilizes the LID domain.</text>
</comment>
<comment type="similarity">
    <text evidence="1">Belongs to the adenylate kinase family.</text>
</comment>
<organism>
    <name type="scientific">Sphingopyxis alaskensis (strain DSM 13593 / LMG 18877 / RB2256)</name>
    <name type="common">Sphingomonas alaskensis</name>
    <dbReference type="NCBI Taxonomy" id="317655"/>
    <lineage>
        <taxon>Bacteria</taxon>
        <taxon>Pseudomonadati</taxon>
        <taxon>Pseudomonadota</taxon>
        <taxon>Alphaproteobacteria</taxon>
        <taxon>Sphingomonadales</taxon>
        <taxon>Sphingomonadaceae</taxon>
        <taxon>Sphingopyxis</taxon>
    </lineage>
</organism>
<keyword id="KW-0067">ATP-binding</keyword>
<keyword id="KW-0963">Cytoplasm</keyword>
<keyword id="KW-0418">Kinase</keyword>
<keyword id="KW-0479">Metal-binding</keyword>
<keyword id="KW-0545">Nucleotide biosynthesis</keyword>
<keyword id="KW-0547">Nucleotide-binding</keyword>
<keyword id="KW-1185">Reference proteome</keyword>
<keyword id="KW-0808">Transferase</keyword>
<keyword id="KW-0862">Zinc</keyword>
<accession>Q1GPC0</accession>